<gene>
    <name type="ordered locus">AF_0740</name>
</gene>
<organism>
    <name type="scientific">Archaeoglobus fulgidus (strain ATCC 49558 / DSM 4304 / JCM 9628 / NBRC 100126 / VC-16)</name>
    <dbReference type="NCBI Taxonomy" id="224325"/>
    <lineage>
        <taxon>Archaea</taxon>
        <taxon>Methanobacteriati</taxon>
        <taxon>Methanobacteriota</taxon>
        <taxon>Archaeoglobi</taxon>
        <taxon>Archaeoglobales</taxon>
        <taxon>Archaeoglobaceae</taxon>
        <taxon>Archaeoglobus</taxon>
    </lineage>
</organism>
<comment type="caution">
    <text evidence="1">Could be the product of a pseudogene. It is encoded in the reverse strand of the region coding for AF_0739.1, a potential gene which belongs to the UPF0146 family.</text>
</comment>
<sequence>MVVTAPVLPTLKTRTAPLSTLLSLTNFSTSGVMSAMSPKPSSSTSISLIIILPPYEVKLRTFIVYNSRLHVVPVEGLDEAVRTNFPRNLDYCGKKLRWWAEGVDERGPFIYFEVGLCHVVNVKSATLRSSPLNNIRCENLKAPPRQKLGYRSKSPYSHLHDLTSVVFCYVVGNLQHEQFLYLRGAIKFCADGDNQGLHAQGL</sequence>
<feature type="chain" id="PRO_0000127915" description="Putative uncharacterized protein AF_0740">
    <location>
        <begin position="1"/>
        <end position="202"/>
    </location>
</feature>
<accession>O29518</accession>
<proteinExistence type="uncertain"/>
<keyword id="KW-1185">Reference proteome</keyword>
<dbReference type="EMBL" id="AE000782">
    <property type="protein sequence ID" value="AAB90513.1"/>
    <property type="molecule type" value="Genomic_DNA"/>
</dbReference>
<dbReference type="PIR" id="D69342">
    <property type="entry name" value="D69342"/>
</dbReference>
<dbReference type="STRING" id="224325.AF_0740"/>
<dbReference type="PaxDb" id="224325-AF_0740"/>
<dbReference type="EnsemblBacteria" id="AAB90513">
    <property type="protein sequence ID" value="AAB90513"/>
    <property type="gene ID" value="AF_0740"/>
</dbReference>
<dbReference type="KEGG" id="afu:AF_0740"/>
<dbReference type="HOGENOM" id="CLU_1352071_0_0_2"/>
<dbReference type="Proteomes" id="UP000002199">
    <property type="component" value="Chromosome"/>
</dbReference>
<name>Y740_ARCFU</name>
<evidence type="ECO:0000305" key="1"/>
<protein>
    <recommendedName>
        <fullName>Putative uncharacterized protein AF_0740</fullName>
    </recommendedName>
</protein>
<reference key="1">
    <citation type="journal article" date="1997" name="Nature">
        <title>The complete genome sequence of the hyperthermophilic, sulphate-reducing archaeon Archaeoglobus fulgidus.</title>
        <authorList>
            <person name="Klenk H.-P."/>
            <person name="Clayton R.A."/>
            <person name="Tomb J.-F."/>
            <person name="White O."/>
            <person name="Nelson K.E."/>
            <person name="Ketchum K.A."/>
            <person name="Dodson R.J."/>
            <person name="Gwinn M.L."/>
            <person name="Hickey E.K."/>
            <person name="Peterson J.D."/>
            <person name="Richardson D.L."/>
            <person name="Kerlavage A.R."/>
            <person name="Graham D.E."/>
            <person name="Kyrpides N.C."/>
            <person name="Fleischmann R.D."/>
            <person name="Quackenbush J."/>
            <person name="Lee N.H."/>
            <person name="Sutton G.G."/>
            <person name="Gill S.R."/>
            <person name="Kirkness E.F."/>
            <person name="Dougherty B.A."/>
            <person name="McKenney K."/>
            <person name="Adams M.D."/>
            <person name="Loftus B.J."/>
            <person name="Peterson S.N."/>
            <person name="Reich C.I."/>
            <person name="McNeil L.K."/>
            <person name="Badger J.H."/>
            <person name="Glodek A."/>
            <person name="Zhou L."/>
            <person name="Overbeek R."/>
            <person name="Gocayne J.D."/>
            <person name="Weidman J.F."/>
            <person name="McDonald L.A."/>
            <person name="Utterback T.R."/>
            <person name="Cotton M.D."/>
            <person name="Spriggs T."/>
            <person name="Artiach P."/>
            <person name="Kaine B.P."/>
            <person name="Sykes S.M."/>
            <person name="Sadow P.W."/>
            <person name="D'Andrea K.P."/>
            <person name="Bowman C."/>
            <person name="Fujii C."/>
            <person name="Garland S.A."/>
            <person name="Mason T.M."/>
            <person name="Olsen G.J."/>
            <person name="Fraser C.M."/>
            <person name="Smith H.O."/>
            <person name="Woese C.R."/>
            <person name="Venter J.C."/>
        </authorList>
    </citation>
    <scope>NUCLEOTIDE SEQUENCE [LARGE SCALE GENOMIC DNA]</scope>
    <source>
        <strain>ATCC 49558 / DSM 4304 / JCM 9628 / NBRC 100126 / VC-16</strain>
    </source>
</reference>